<dbReference type="EC" id="1.1.1.23" evidence="1"/>
<dbReference type="EMBL" id="CP000016">
    <property type="protein sequence ID" value="AAZ41094.1"/>
    <property type="molecule type" value="Genomic_DNA"/>
</dbReference>
<dbReference type="RefSeq" id="WP_011283004.1">
    <property type="nucleotide sequence ID" value="NC_007292.1"/>
</dbReference>
<dbReference type="SMR" id="Q492K3"/>
<dbReference type="STRING" id="291272.BPEN_478"/>
<dbReference type="KEGG" id="bpn:BPEN_478"/>
<dbReference type="eggNOG" id="COG0141">
    <property type="taxonomic scope" value="Bacteria"/>
</dbReference>
<dbReference type="HOGENOM" id="CLU_006732_3_0_6"/>
<dbReference type="OrthoDB" id="9805269at2"/>
<dbReference type="UniPathway" id="UPA00031">
    <property type="reaction ID" value="UER00014"/>
</dbReference>
<dbReference type="Proteomes" id="UP000007794">
    <property type="component" value="Chromosome"/>
</dbReference>
<dbReference type="GO" id="GO:0005829">
    <property type="term" value="C:cytosol"/>
    <property type="evidence" value="ECO:0007669"/>
    <property type="project" value="TreeGrafter"/>
</dbReference>
<dbReference type="GO" id="GO:0004399">
    <property type="term" value="F:histidinol dehydrogenase activity"/>
    <property type="evidence" value="ECO:0007669"/>
    <property type="project" value="UniProtKB-UniRule"/>
</dbReference>
<dbReference type="GO" id="GO:0051287">
    <property type="term" value="F:NAD binding"/>
    <property type="evidence" value="ECO:0007669"/>
    <property type="project" value="InterPro"/>
</dbReference>
<dbReference type="GO" id="GO:0008270">
    <property type="term" value="F:zinc ion binding"/>
    <property type="evidence" value="ECO:0007669"/>
    <property type="project" value="UniProtKB-UniRule"/>
</dbReference>
<dbReference type="GO" id="GO:0000105">
    <property type="term" value="P:L-histidine biosynthetic process"/>
    <property type="evidence" value="ECO:0007669"/>
    <property type="project" value="UniProtKB-UniRule"/>
</dbReference>
<dbReference type="CDD" id="cd06572">
    <property type="entry name" value="Histidinol_dh"/>
    <property type="match status" value="1"/>
</dbReference>
<dbReference type="FunFam" id="3.40.50.1980:FF:000001">
    <property type="entry name" value="Histidinol dehydrogenase"/>
    <property type="match status" value="1"/>
</dbReference>
<dbReference type="FunFam" id="3.40.50.1980:FF:000002">
    <property type="entry name" value="Histidinol dehydrogenase, chloroplastic"/>
    <property type="match status" value="1"/>
</dbReference>
<dbReference type="Gene3D" id="1.20.5.1300">
    <property type="match status" value="1"/>
</dbReference>
<dbReference type="Gene3D" id="3.40.50.1980">
    <property type="entry name" value="Nitrogenase molybdenum iron protein domain"/>
    <property type="match status" value="2"/>
</dbReference>
<dbReference type="HAMAP" id="MF_01024">
    <property type="entry name" value="HisD"/>
    <property type="match status" value="1"/>
</dbReference>
<dbReference type="InterPro" id="IPR016161">
    <property type="entry name" value="Ald_DH/histidinol_DH"/>
</dbReference>
<dbReference type="InterPro" id="IPR001692">
    <property type="entry name" value="Histidinol_DH_CS"/>
</dbReference>
<dbReference type="InterPro" id="IPR022695">
    <property type="entry name" value="Histidinol_DH_monofunct"/>
</dbReference>
<dbReference type="InterPro" id="IPR012131">
    <property type="entry name" value="Hstdl_DH"/>
</dbReference>
<dbReference type="NCBIfam" id="TIGR00069">
    <property type="entry name" value="hisD"/>
    <property type="match status" value="1"/>
</dbReference>
<dbReference type="PANTHER" id="PTHR21256:SF2">
    <property type="entry name" value="HISTIDINE BIOSYNTHESIS TRIFUNCTIONAL PROTEIN"/>
    <property type="match status" value="1"/>
</dbReference>
<dbReference type="PANTHER" id="PTHR21256">
    <property type="entry name" value="HISTIDINOL DEHYDROGENASE HDH"/>
    <property type="match status" value="1"/>
</dbReference>
<dbReference type="Pfam" id="PF00815">
    <property type="entry name" value="Histidinol_dh"/>
    <property type="match status" value="1"/>
</dbReference>
<dbReference type="PIRSF" id="PIRSF000099">
    <property type="entry name" value="Histidinol_dh"/>
    <property type="match status" value="1"/>
</dbReference>
<dbReference type="PRINTS" id="PR00083">
    <property type="entry name" value="HOLDHDRGNASE"/>
</dbReference>
<dbReference type="SUPFAM" id="SSF53720">
    <property type="entry name" value="ALDH-like"/>
    <property type="match status" value="1"/>
</dbReference>
<dbReference type="PROSITE" id="PS00611">
    <property type="entry name" value="HISOL_DEHYDROGENASE"/>
    <property type="match status" value="1"/>
</dbReference>
<reference key="1">
    <citation type="journal article" date="2005" name="Genome Res.">
        <title>Genome sequence of Blochmannia pennsylvanicus indicates parallel evolutionary trends among bacterial mutualists of insects.</title>
        <authorList>
            <person name="Degnan P.H."/>
            <person name="Lazarus A.B."/>
            <person name="Wernegreen J.J."/>
        </authorList>
    </citation>
    <scope>NUCLEOTIDE SEQUENCE [LARGE SCALE GENOMIC DNA]</scope>
    <source>
        <strain>BPEN</strain>
    </source>
</reference>
<gene>
    <name evidence="1" type="primary">hisD</name>
    <name type="ordered locus">BPEN_478</name>
</gene>
<sequence>MISHEHPISIYWNDCSKSEQKKLLTRPINNKLNDIYINVKNILTKVYNEGDRALFKFNFDFDNVQTTQLQIPTEIIMNSGRNLSNEIKQAIHTAMTNITRFHQAQCYSEIIVETLPGVYCQQIIRPLNIVGLYVPGGTAPLLSTVMMLGVPARIAKCKRVILCSPPPIPDVIIYTAQLCGIDEIYQIGGSQSIAAMGFGTESIPKVDKIFGPGNIWVTEAKRQINLAPNGAAIDMLAGPSEILIIADNTANPIFIAADLLSQSEHGPDSHAILITPYSCIAEKTKKELHKQLKILPRNDIVRNVLLNSRMIITNNLMECFSISNSYAPEHLIIQIENASDYLHYITNAGSIFLGNWSPETAGDYASGPNHVLPTYGRAVATSGLGVIDFQKRMSVQQLTQNGLLQLSSTITTLTQIEQLKAHEYAITHRINYIKEQNEHSLLG</sequence>
<protein>
    <recommendedName>
        <fullName evidence="1">Histidinol dehydrogenase</fullName>
        <shortName evidence="1">HDH</shortName>
        <ecNumber evidence="1">1.1.1.23</ecNumber>
    </recommendedName>
</protein>
<name>HISX_BLOPB</name>
<proteinExistence type="inferred from homology"/>
<organism>
    <name type="scientific">Blochmanniella pennsylvanica (strain BPEN)</name>
    <dbReference type="NCBI Taxonomy" id="291272"/>
    <lineage>
        <taxon>Bacteria</taxon>
        <taxon>Pseudomonadati</taxon>
        <taxon>Pseudomonadota</taxon>
        <taxon>Gammaproteobacteria</taxon>
        <taxon>Enterobacterales</taxon>
        <taxon>Enterobacteriaceae</taxon>
        <taxon>ant endosymbionts</taxon>
        <taxon>Candidatus Blochmanniella</taxon>
    </lineage>
</organism>
<accession>Q492K3</accession>
<comment type="function">
    <text evidence="1">Catalyzes the sequential NAD-dependent oxidations of L-histidinol to L-histidinaldehyde and then to L-histidine.</text>
</comment>
<comment type="catalytic activity">
    <reaction evidence="1">
        <text>L-histidinol + 2 NAD(+) + H2O = L-histidine + 2 NADH + 3 H(+)</text>
        <dbReference type="Rhea" id="RHEA:20641"/>
        <dbReference type="ChEBI" id="CHEBI:15377"/>
        <dbReference type="ChEBI" id="CHEBI:15378"/>
        <dbReference type="ChEBI" id="CHEBI:57540"/>
        <dbReference type="ChEBI" id="CHEBI:57595"/>
        <dbReference type="ChEBI" id="CHEBI:57699"/>
        <dbReference type="ChEBI" id="CHEBI:57945"/>
        <dbReference type="EC" id="1.1.1.23"/>
    </reaction>
</comment>
<comment type="cofactor">
    <cofactor evidence="1">
        <name>Zn(2+)</name>
        <dbReference type="ChEBI" id="CHEBI:29105"/>
    </cofactor>
    <text evidence="1">Binds 1 zinc ion per subunit.</text>
</comment>
<comment type="pathway">
    <text evidence="1">Amino-acid biosynthesis; L-histidine biosynthesis; L-histidine from 5-phospho-alpha-D-ribose 1-diphosphate: step 9/9.</text>
</comment>
<comment type="subunit">
    <text evidence="1">Homodimer.</text>
</comment>
<comment type="similarity">
    <text evidence="1">Belongs to the histidinol dehydrogenase family.</text>
</comment>
<keyword id="KW-0028">Amino-acid biosynthesis</keyword>
<keyword id="KW-0368">Histidine biosynthesis</keyword>
<keyword id="KW-0479">Metal-binding</keyword>
<keyword id="KW-0520">NAD</keyword>
<keyword id="KW-0560">Oxidoreductase</keyword>
<keyword id="KW-1185">Reference proteome</keyword>
<keyword id="KW-0862">Zinc</keyword>
<feature type="chain" id="PRO_0000135735" description="Histidinol dehydrogenase">
    <location>
        <begin position="1"/>
        <end position="443"/>
    </location>
</feature>
<feature type="active site" description="Proton acceptor" evidence="1">
    <location>
        <position position="329"/>
    </location>
</feature>
<feature type="active site" description="Proton acceptor" evidence="1">
    <location>
        <position position="330"/>
    </location>
</feature>
<feature type="binding site" evidence="1">
    <location>
        <position position="133"/>
    </location>
    <ligand>
        <name>NAD(+)</name>
        <dbReference type="ChEBI" id="CHEBI:57540"/>
    </ligand>
</feature>
<feature type="binding site" evidence="1">
    <location>
        <position position="191"/>
    </location>
    <ligand>
        <name>NAD(+)</name>
        <dbReference type="ChEBI" id="CHEBI:57540"/>
    </ligand>
</feature>
<feature type="binding site" evidence="1">
    <location>
        <position position="214"/>
    </location>
    <ligand>
        <name>NAD(+)</name>
        <dbReference type="ChEBI" id="CHEBI:57540"/>
    </ligand>
</feature>
<feature type="binding site" evidence="1">
    <location>
        <position position="240"/>
    </location>
    <ligand>
        <name>substrate</name>
    </ligand>
</feature>
<feature type="binding site" evidence="1">
    <location>
        <position position="262"/>
    </location>
    <ligand>
        <name>substrate</name>
    </ligand>
</feature>
<feature type="binding site" evidence="1">
    <location>
        <position position="262"/>
    </location>
    <ligand>
        <name>Zn(2+)</name>
        <dbReference type="ChEBI" id="CHEBI:29105"/>
    </ligand>
</feature>
<feature type="binding site" evidence="1">
    <location>
        <position position="265"/>
    </location>
    <ligand>
        <name>substrate</name>
    </ligand>
</feature>
<feature type="binding site" evidence="1">
    <location>
        <position position="265"/>
    </location>
    <ligand>
        <name>Zn(2+)</name>
        <dbReference type="ChEBI" id="CHEBI:29105"/>
    </ligand>
</feature>
<feature type="binding site" evidence="1">
    <location>
        <position position="330"/>
    </location>
    <ligand>
        <name>substrate</name>
    </ligand>
</feature>
<feature type="binding site" evidence="1">
    <location>
        <position position="363"/>
    </location>
    <ligand>
        <name>substrate</name>
    </ligand>
</feature>
<feature type="binding site" evidence="1">
    <location>
        <position position="363"/>
    </location>
    <ligand>
        <name>Zn(2+)</name>
        <dbReference type="ChEBI" id="CHEBI:29105"/>
    </ligand>
</feature>
<feature type="binding site" evidence="1">
    <location>
        <position position="417"/>
    </location>
    <ligand>
        <name>substrate</name>
    </ligand>
</feature>
<feature type="binding site" evidence="1">
    <location>
        <position position="422"/>
    </location>
    <ligand>
        <name>substrate</name>
    </ligand>
</feature>
<feature type="binding site" evidence="1">
    <location>
        <position position="422"/>
    </location>
    <ligand>
        <name>Zn(2+)</name>
        <dbReference type="ChEBI" id="CHEBI:29105"/>
    </ligand>
</feature>
<evidence type="ECO:0000255" key="1">
    <source>
        <dbReference type="HAMAP-Rule" id="MF_01024"/>
    </source>
</evidence>